<gene>
    <name type="primary">MT-CYB</name>
    <name type="synonym">COB</name>
    <name type="synonym">CYTB</name>
    <name type="synonym">MTCYB</name>
</gene>
<dbReference type="EMBL" id="X56284">
    <property type="protein sequence ID" value="CAA39731.1"/>
    <property type="molecule type" value="Genomic_DNA"/>
</dbReference>
<dbReference type="EMBL" id="D84205">
    <property type="protein sequence ID" value="BAA12255.1"/>
    <property type="molecule type" value="Genomic_DNA"/>
</dbReference>
<dbReference type="EMBL" id="AF034730">
    <property type="protein sequence ID" value="AAC31685.1"/>
    <property type="molecule type" value="Genomic_DNA"/>
</dbReference>
<dbReference type="EMBL" id="AF010406">
    <property type="protein sequence ID" value="AAD10107.1"/>
    <property type="molecule type" value="Genomic_DNA"/>
</dbReference>
<dbReference type="EMBL" id="L29055">
    <property type="status" value="NOT_ANNOTATED_CDS"/>
    <property type="molecule type" value="Genomic_DNA"/>
</dbReference>
<dbReference type="PIR" id="S17413">
    <property type="entry name" value="S17413"/>
</dbReference>
<dbReference type="RefSeq" id="NP_008418.1">
    <property type="nucleotide sequence ID" value="NC_001941.1"/>
</dbReference>
<dbReference type="PDB" id="5J4Z">
    <property type="method" value="EM"/>
    <property type="resolution" value="5.80 A"/>
    <property type="chains" value="AC/AN=2-379"/>
</dbReference>
<dbReference type="PDB" id="5J7Y">
    <property type="method" value="EM"/>
    <property type="resolution" value="6.70 A"/>
    <property type="chains" value="AC/AN=2-379"/>
</dbReference>
<dbReference type="PDB" id="5J8K">
    <property type="method" value="EM"/>
    <property type="resolution" value="7.80 A"/>
    <property type="chains" value="AC/AN=2-379"/>
</dbReference>
<dbReference type="PDB" id="6Q9E">
    <property type="method" value="EM"/>
    <property type="resolution" value="3.90 A"/>
    <property type="chains" value="b1/b2=1-379"/>
</dbReference>
<dbReference type="PDB" id="6QBX">
    <property type="method" value="EM"/>
    <property type="resolution" value="4.20 A"/>
    <property type="chains" value="b1/b2=1-379"/>
</dbReference>
<dbReference type="PDB" id="6QC2">
    <property type="method" value="EM"/>
    <property type="resolution" value="4.20 A"/>
    <property type="chains" value="b1/b2=1-379"/>
</dbReference>
<dbReference type="PDB" id="6QC3">
    <property type="method" value="EM"/>
    <property type="resolution" value="4.20 A"/>
    <property type="chains" value="b1/b2=1-379"/>
</dbReference>
<dbReference type="PDB" id="6QC4">
    <property type="method" value="EM"/>
    <property type="resolution" value="4.60 A"/>
    <property type="chains" value="b1/b2=1-379"/>
</dbReference>
<dbReference type="PDBsum" id="5J4Z"/>
<dbReference type="PDBsum" id="5J7Y"/>
<dbReference type="PDBsum" id="5J8K"/>
<dbReference type="PDBsum" id="6Q9E"/>
<dbReference type="PDBsum" id="6QBX"/>
<dbReference type="PDBsum" id="6QC2"/>
<dbReference type="PDBsum" id="6QC3"/>
<dbReference type="PDBsum" id="6QC4"/>
<dbReference type="EMDB" id="EMD-4481"/>
<dbReference type="EMDB" id="EMD-4493"/>
<dbReference type="EMDB" id="EMD-4494"/>
<dbReference type="EMDB" id="EMD-4495"/>
<dbReference type="EMDB" id="EMD-4496"/>
<dbReference type="EMDB" id="EMD-8128"/>
<dbReference type="SMR" id="P24959"/>
<dbReference type="STRING" id="9940.ENSOARP00000000013"/>
<dbReference type="PaxDb" id="9940-ENSOARP00000000013"/>
<dbReference type="GeneID" id="808260"/>
<dbReference type="KEGG" id="oas:808260"/>
<dbReference type="CTD" id="4519"/>
<dbReference type="eggNOG" id="KOG4663">
    <property type="taxonomic scope" value="Eukaryota"/>
</dbReference>
<dbReference type="OrthoDB" id="244at2759"/>
<dbReference type="Proteomes" id="UP000002356">
    <property type="component" value="Mitochondrion"/>
</dbReference>
<dbReference type="GO" id="GO:0005743">
    <property type="term" value="C:mitochondrial inner membrane"/>
    <property type="evidence" value="ECO:0007669"/>
    <property type="project" value="UniProtKB-SubCell"/>
</dbReference>
<dbReference type="GO" id="GO:0045275">
    <property type="term" value="C:respiratory chain complex III"/>
    <property type="evidence" value="ECO:0007669"/>
    <property type="project" value="InterPro"/>
</dbReference>
<dbReference type="GO" id="GO:0046872">
    <property type="term" value="F:metal ion binding"/>
    <property type="evidence" value="ECO:0007669"/>
    <property type="project" value="UniProtKB-KW"/>
</dbReference>
<dbReference type="GO" id="GO:0008121">
    <property type="term" value="F:ubiquinol-cytochrome-c reductase activity"/>
    <property type="evidence" value="ECO:0007669"/>
    <property type="project" value="InterPro"/>
</dbReference>
<dbReference type="GO" id="GO:0006122">
    <property type="term" value="P:mitochondrial electron transport, ubiquinol to cytochrome c"/>
    <property type="evidence" value="ECO:0007669"/>
    <property type="project" value="TreeGrafter"/>
</dbReference>
<dbReference type="CDD" id="cd00290">
    <property type="entry name" value="cytochrome_b_C"/>
    <property type="match status" value="1"/>
</dbReference>
<dbReference type="CDD" id="cd00284">
    <property type="entry name" value="Cytochrome_b_N"/>
    <property type="match status" value="1"/>
</dbReference>
<dbReference type="FunFam" id="1.20.810.10:FF:000002">
    <property type="entry name" value="Cytochrome b"/>
    <property type="match status" value="1"/>
</dbReference>
<dbReference type="Gene3D" id="1.20.810.10">
    <property type="entry name" value="Cytochrome Bc1 Complex, Chain C"/>
    <property type="match status" value="1"/>
</dbReference>
<dbReference type="InterPro" id="IPR005798">
    <property type="entry name" value="Cyt_b/b6_C"/>
</dbReference>
<dbReference type="InterPro" id="IPR036150">
    <property type="entry name" value="Cyt_b/b6_C_sf"/>
</dbReference>
<dbReference type="InterPro" id="IPR005797">
    <property type="entry name" value="Cyt_b/b6_N"/>
</dbReference>
<dbReference type="InterPro" id="IPR027387">
    <property type="entry name" value="Cytb/b6-like_sf"/>
</dbReference>
<dbReference type="InterPro" id="IPR030689">
    <property type="entry name" value="Cytochrome_b"/>
</dbReference>
<dbReference type="InterPro" id="IPR048260">
    <property type="entry name" value="Cytochrome_b_C_euk/bac"/>
</dbReference>
<dbReference type="InterPro" id="IPR048259">
    <property type="entry name" value="Cytochrome_b_N_euk/bac"/>
</dbReference>
<dbReference type="InterPro" id="IPR016174">
    <property type="entry name" value="Di-haem_cyt_TM"/>
</dbReference>
<dbReference type="PANTHER" id="PTHR19271">
    <property type="entry name" value="CYTOCHROME B"/>
    <property type="match status" value="1"/>
</dbReference>
<dbReference type="PANTHER" id="PTHR19271:SF16">
    <property type="entry name" value="CYTOCHROME B"/>
    <property type="match status" value="1"/>
</dbReference>
<dbReference type="Pfam" id="PF00032">
    <property type="entry name" value="Cytochrom_B_C"/>
    <property type="match status" value="1"/>
</dbReference>
<dbReference type="Pfam" id="PF00033">
    <property type="entry name" value="Cytochrome_B"/>
    <property type="match status" value="1"/>
</dbReference>
<dbReference type="PIRSF" id="PIRSF038885">
    <property type="entry name" value="COB"/>
    <property type="match status" value="1"/>
</dbReference>
<dbReference type="SUPFAM" id="SSF81648">
    <property type="entry name" value="a domain/subunit of cytochrome bc1 complex (Ubiquinol-cytochrome c reductase)"/>
    <property type="match status" value="1"/>
</dbReference>
<dbReference type="SUPFAM" id="SSF81342">
    <property type="entry name" value="Transmembrane di-heme cytochromes"/>
    <property type="match status" value="1"/>
</dbReference>
<dbReference type="PROSITE" id="PS51003">
    <property type="entry name" value="CYTB_CTER"/>
    <property type="match status" value="1"/>
</dbReference>
<dbReference type="PROSITE" id="PS51002">
    <property type="entry name" value="CYTB_NTER"/>
    <property type="match status" value="1"/>
</dbReference>
<accession>P24959</accession>
<accession>O78758</accession>
<accession>Q35207</accession>
<accession>Q35271</accession>
<proteinExistence type="evidence at protein level"/>
<comment type="function">
    <text evidence="2">Component of the ubiquinol-cytochrome c reductase complex (complex III or cytochrome b-c1 complex) that is part of the mitochondrial respiratory chain. The b-c1 complex mediates electron transfer from ubiquinol to cytochrome c. Contributes to the generation of a proton gradient across the mitochondrial membrane that is then used for ATP synthesis.</text>
</comment>
<comment type="cofactor">
    <cofactor evidence="2">
        <name>heme b</name>
        <dbReference type="ChEBI" id="CHEBI:60344"/>
    </cofactor>
    <text evidence="2">Binds 2 heme b groups non-covalently.</text>
</comment>
<comment type="subunit">
    <text evidence="2">The cytochrome bc1 complex contains 11 subunits: 3 respiratory subunits (MT-CYB, CYC1 and UQCRFS1), 2 core proteins (UQCRC1 and UQCRC2) and 6 low-molecular weight proteins (UQCRH/QCR6, UQCRB/QCR7, UQCRQ/QCR8, UQCR10/QCR9, UQCR11/QCR10 and a cleavage product of UQCRFS1). This cytochrome bc1 complex then forms a dimer.</text>
</comment>
<comment type="subcellular location">
    <subcellularLocation>
        <location evidence="2">Mitochondrion inner membrane</location>
        <topology evidence="2">Multi-pass membrane protein</topology>
    </subcellularLocation>
</comment>
<comment type="miscellaneous">
    <text evidence="1">Heme 1 (or BL or b562) is low-potential and absorbs at about 562 nm, and heme 2 (or BH or b566) is high-potential and absorbs at about 566 nm.</text>
</comment>
<comment type="similarity">
    <text evidence="3 4">Belongs to the cytochrome b family.</text>
</comment>
<comment type="caution">
    <text evidence="2">The full-length protein contains only eight transmembrane helices, not nine as predicted by bioinformatics tools.</text>
</comment>
<geneLocation type="mitochondrion"/>
<reference key="1">
    <citation type="journal article" date="1991" name="J. Mol. Evol.">
        <title>Evolution of the cytochrome b gene of mammals.</title>
        <authorList>
            <person name="Irwin D.M."/>
            <person name="Kocher T.D."/>
            <person name="Wilson A.C."/>
        </authorList>
    </citation>
    <scope>NUCLEOTIDE SEQUENCE [GENOMIC DNA]</scope>
</reference>
<reference key="2">
    <citation type="submission" date="1996-04" db="EMBL/GenBank/DDBJ databases">
        <authorList>
            <person name="Arai K."/>
            <person name="Munechika I."/>
            <person name="Ito I."/>
            <person name="Kikkawa A."/>
            <person name="Kanazawa T."/>
            <person name="Kosugiyama M."/>
        </authorList>
    </citation>
    <scope>NUCLEOTIDE SEQUENCE [GENOMIC DNA]</scope>
    <source>
        <tissue>Blood</tissue>
    </source>
</reference>
<reference key="3">
    <citation type="journal article" date="1998" name="J. Mammal. Evol.">
        <title>Molecular systematics of the subfamily Caprinae (Artiodactyla, Bovidae) as determined from cytochrome b sequences.</title>
        <authorList>
            <person name="Hassanin A."/>
            <person name="Pasquet E."/>
            <person name="Vigne J.-D."/>
        </authorList>
    </citation>
    <scope>NUCLEOTIDE SEQUENCE [GENOMIC DNA]</scope>
</reference>
<reference key="4">
    <citation type="journal article" date="1998" name="J. Mol. Evol.">
        <title>The complete mitochondrial DNA sequence of the domestic sheep (Ovis aries) and comparison with the other major ovine haplotype.</title>
        <authorList>
            <person name="Hiendleder S."/>
            <person name="Lewalski H."/>
            <person name="Wassmuth R."/>
            <person name="Janke A."/>
        </authorList>
    </citation>
    <scope>NUCLEOTIDE SEQUENCE [LARGE SCALE GENOMIC DNA]</scope>
    <source>
        <strain evidence="6">Merinolandschaf</strain>
        <tissue>Liver</tissue>
    </source>
</reference>
<reference key="5">
    <citation type="journal article" date="1995" name="Curr. Genet.">
        <title>Nucleotide sequence of the sheep mitochondrial DNA D-loop and its flanking tRNA genes.</title>
        <authorList>
            <person name="Zardoya R."/>
            <person name="Villalta M."/>
            <person name="Lopez-Perez M.J."/>
            <person name="Garrido-Pertierra A."/>
            <person name="Montoya J."/>
            <person name="Bautista J.M."/>
        </authorList>
    </citation>
    <scope>NUCLEOTIDE SEQUENCE [GENOMIC DNA] OF 204-379</scope>
</reference>
<feature type="chain" id="PRO_0000061537" description="Cytochrome b">
    <location>
        <begin position="1"/>
        <end position="379"/>
    </location>
</feature>
<feature type="transmembrane region" description="Helical" evidence="2">
    <location>
        <begin position="33"/>
        <end position="53"/>
    </location>
</feature>
<feature type="transmembrane region" description="Helical" evidence="2">
    <location>
        <begin position="77"/>
        <end position="98"/>
    </location>
</feature>
<feature type="transmembrane region" description="Helical" evidence="2">
    <location>
        <begin position="113"/>
        <end position="133"/>
    </location>
</feature>
<feature type="transmembrane region" description="Helical" evidence="2">
    <location>
        <begin position="178"/>
        <end position="198"/>
    </location>
</feature>
<feature type="transmembrane region" description="Helical" evidence="2">
    <location>
        <begin position="226"/>
        <end position="246"/>
    </location>
</feature>
<feature type="transmembrane region" description="Helical" evidence="2">
    <location>
        <begin position="288"/>
        <end position="308"/>
    </location>
</feature>
<feature type="transmembrane region" description="Helical" evidence="2">
    <location>
        <begin position="320"/>
        <end position="340"/>
    </location>
</feature>
<feature type="transmembrane region" description="Helical" evidence="2">
    <location>
        <begin position="347"/>
        <end position="367"/>
    </location>
</feature>
<feature type="binding site" description="axial binding residue" evidence="2">
    <location>
        <position position="83"/>
    </location>
    <ligand>
        <name>heme b</name>
        <dbReference type="ChEBI" id="CHEBI:60344"/>
        <label>b562</label>
    </ligand>
    <ligandPart>
        <name>Fe</name>
        <dbReference type="ChEBI" id="CHEBI:18248"/>
    </ligandPart>
</feature>
<feature type="binding site" description="axial binding residue" evidence="2">
    <location>
        <position position="97"/>
    </location>
    <ligand>
        <name>heme b</name>
        <dbReference type="ChEBI" id="CHEBI:60344"/>
        <label>b566</label>
    </ligand>
    <ligandPart>
        <name>Fe</name>
        <dbReference type="ChEBI" id="CHEBI:18248"/>
    </ligandPart>
</feature>
<feature type="binding site" description="axial binding residue" evidence="2">
    <location>
        <position position="182"/>
    </location>
    <ligand>
        <name>heme b</name>
        <dbReference type="ChEBI" id="CHEBI:60344"/>
        <label>b562</label>
    </ligand>
    <ligandPart>
        <name>Fe</name>
        <dbReference type="ChEBI" id="CHEBI:18248"/>
    </ligandPart>
</feature>
<feature type="binding site" description="axial binding residue" evidence="2">
    <location>
        <position position="196"/>
    </location>
    <ligand>
        <name>heme b</name>
        <dbReference type="ChEBI" id="CHEBI:60344"/>
        <label>b566</label>
    </ligand>
    <ligandPart>
        <name>Fe</name>
        <dbReference type="ChEBI" id="CHEBI:18248"/>
    </ligandPart>
</feature>
<feature type="binding site" evidence="2">
    <location>
        <position position="201"/>
    </location>
    <ligand>
        <name>a ubiquinone</name>
        <dbReference type="ChEBI" id="CHEBI:16389"/>
    </ligand>
</feature>
<feature type="sequence variant">
    <original>V</original>
    <variation>I</variation>
    <location>
        <position position="295"/>
    </location>
</feature>
<feature type="sequence conflict" description="In Ref. 2; BAA12255." evidence="5" ref="2">
    <original>A</original>
    <variation>G</variation>
    <location>
        <position position="191"/>
    </location>
</feature>
<feature type="sequence conflict" description="In Ref. 3; AAC31685 and 5; L29055." evidence="5" ref="3 5">
    <original>I</original>
    <variation>T</variation>
    <location>
        <position position="238"/>
    </location>
</feature>
<sequence length="379" mass="42849">MINIRKTHPLMKIVNNAFIDLPAPSNISSWWNFGSLLGICLILQILTGLFLAMHYTPDTTTAFSSVTHICRDVNYGWIIRYMHANGASMFFICLFMHVGRGLYYGSYTFLETWNIGVILLFATMATAFMGYVLPWGQMSFWGATVITNLLSAIPYIGTNLVEWIWGGFSVDKATLTRFFAFHFIFPFIIAALAMVHLLFLHETGSNNPTGIPSDTDKIPFHPYYTIKDILGAILLILILMLLVLFTPDLLGDPDNYTPANPLNTPPHIKPEWYFLFAYAILRSIPNKLGGVLALVLSILVLVIMPLLHTSKQRSMMFRPISQCMFWILVADLLTLTWIGGQPVEHPYIIIGQLASIMYFLIILVMMPVASIIENNLLKW</sequence>
<name>CYB_SHEEP</name>
<evidence type="ECO:0000250" key="1"/>
<evidence type="ECO:0000250" key="2">
    <source>
        <dbReference type="UniProtKB" id="P00157"/>
    </source>
</evidence>
<evidence type="ECO:0000255" key="3">
    <source>
        <dbReference type="PROSITE-ProRule" id="PRU00967"/>
    </source>
</evidence>
<evidence type="ECO:0000255" key="4">
    <source>
        <dbReference type="PROSITE-ProRule" id="PRU00968"/>
    </source>
</evidence>
<evidence type="ECO:0000305" key="5"/>
<evidence type="ECO:0000312" key="6">
    <source>
        <dbReference type="Proteomes" id="UP000002356"/>
    </source>
</evidence>
<protein>
    <recommendedName>
        <fullName>Cytochrome b</fullName>
    </recommendedName>
    <alternativeName>
        <fullName>Complex III subunit 3</fullName>
    </alternativeName>
    <alternativeName>
        <fullName>Complex III subunit III</fullName>
    </alternativeName>
    <alternativeName>
        <fullName>Cytochrome b-c1 complex subunit 3</fullName>
    </alternativeName>
    <alternativeName>
        <fullName>Ubiquinol-cytochrome-c reductase complex cytochrome b subunit</fullName>
    </alternativeName>
</protein>
<keyword id="KW-0002">3D-structure</keyword>
<keyword id="KW-0249">Electron transport</keyword>
<keyword id="KW-0349">Heme</keyword>
<keyword id="KW-0408">Iron</keyword>
<keyword id="KW-0472">Membrane</keyword>
<keyword id="KW-0479">Metal-binding</keyword>
<keyword id="KW-0496">Mitochondrion</keyword>
<keyword id="KW-0999">Mitochondrion inner membrane</keyword>
<keyword id="KW-1185">Reference proteome</keyword>
<keyword id="KW-0679">Respiratory chain</keyword>
<keyword id="KW-0812">Transmembrane</keyword>
<keyword id="KW-1133">Transmembrane helix</keyword>
<keyword id="KW-0813">Transport</keyword>
<keyword id="KW-0830">Ubiquinone</keyword>
<organism>
    <name type="scientific">Ovis aries</name>
    <name type="common">Sheep</name>
    <dbReference type="NCBI Taxonomy" id="9940"/>
    <lineage>
        <taxon>Eukaryota</taxon>
        <taxon>Metazoa</taxon>
        <taxon>Chordata</taxon>
        <taxon>Craniata</taxon>
        <taxon>Vertebrata</taxon>
        <taxon>Euteleostomi</taxon>
        <taxon>Mammalia</taxon>
        <taxon>Eutheria</taxon>
        <taxon>Laurasiatheria</taxon>
        <taxon>Artiodactyla</taxon>
        <taxon>Ruminantia</taxon>
        <taxon>Pecora</taxon>
        <taxon>Bovidae</taxon>
        <taxon>Caprinae</taxon>
        <taxon>Ovis</taxon>
    </lineage>
</organism>